<dbReference type="EC" id="3.4.14.11"/>
<dbReference type="EMBL" id="BA000030">
    <property type="protein sequence ID" value="BAC69385.1"/>
    <property type="molecule type" value="Genomic_DNA"/>
</dbReference>
<dbReference type="SMR" id="Q82MI6"/>
<dbReference type="ESTHER" id="straw-pepx">
    <property type="family name" value="Lactobacillus_peptidase"/>
</dbReference>
<dbReference type="KEGG" id="sma:SAVERM_1674"/>
<dbReference type="eggNOG" id="COG2936">
    <property type="taxonomic scope" value="Bacteria"/>
</dbReference>
<dbReference type="HOGENOM" id="CLU_011800_1_0_11"/>
<dbReference type="Proteomes" id="UP000000428">
    <property type="component" value="Chromosome"/>
</dbReference>
<dbReference type="GO" id="GO:0004177">
    <property type="term" value="F:aminopeptidase activity"/>
    <property type="evidence" value="ECO:0007669"/>
    <property type="project" value="UniProtKB-KW"/>
</dbReference>
<dbReference type="GO" id="GO:0008239">
    <property type="term" value="F:dipeptidyl-peptidase activity"/>
    <property type="evidence" value="ECO:0007669"/>
    <property type="project" value="UniProtKB-EC"/>
</dbReference>
<dbReference type="GO" id="GO:0008236">
    <property type="term" value="F:serine-type peptidase activity"/>
    <property type="evidence" value="ECO:0007669"/>
    <property type="project" value="UniProtKB-KW"/>
</dbReference>
<dbReference type="GO" id="GO:0006508">
    <property type="term" value="P:proteolysis"/>
    <property type="evidence" value="ECO:0007669"/>
    <property type="project" value="UniProtKB-KW"/>
</dbReference>
<dbReference type="Gene3D" id="3.40.50.1820">
    <property type="entry name" value="alpha/beta hydrolase"/>
    <property type="match status" value="2"/>
</dbReference>
<dbReference type="Gene3D" id="2.60.120.260">
    <property type="entry name" value="Galactose-binding domain-like"/>
    <property type="match status" value="1"/>
</dbReference>
<dbReference type="InterPro" id="IPR029058">
    <property type="entry name" value="AB_hydrolase_fold"/>
</dbReference>
<dbReference type="InterPro" id="IPR008979">
    <property type="entry name" value="Galactose-bd-like_sf"/>
</dbReference>
<dbReference type="InterPro" id="IPR000383">
    <property type="entry name" value="Xaa-Pro-like_dom"/>
</dbReference>
<dbReference type="InterPro" id="IPR013736">
    <property type="entry name" value="Xaa-Pro_dipept_C"/>
</dbReference>
<dbReference type="NCBIfam" id="NF003780">
    <property type="entry name" value="PRK05371.1-1"/>
    <property type="match status" value="1"/>
</dbReference>
<dbReference type="Pfam" id="PF02129">
    <property type="entry name" value="Peptidase_S15"/>
    <property type="match status" value="1"/>
</dbReference>
<dbReference type="Pfam" id="PF08530">
    <property type="entry name" value="PepX_C"/>
    <property type="match status" value="1"/>
</dbReference>
<dbReference type="SMART" id="SM00939">
    <property type="entry name" value="PepX_C"/>
    <property type="match status" value="1"/>
</dbReference>
<dbReference type="SUPFAM" id="SSF53474">
    <property type="entry name" value="alpha/beta-Hydrolases"/>
    <property type="match status" value="1"/>
</dbReference>
<dbReference type="SUPFAM" id="SSF49785">
    <property type="entry name" value="Galactose-binding domain-like"/>
    <property type="match status" value="1"/>
</dbReference>
<protein>
    <recommendedName>
        <fullName>Putative Xaa-Pro dipeptidyl-peptidase</fullName>
        <shortName>X-Pro dipeptidyl-peptidase</shortName>
        <ecNumber>3.4.14.11</ecNumber>
    </recommendedName>
    <alternativeName>
        <fullName>X-prolyl-dipeptidyl aminopeptidase</fullName>
        <shortName>X-PDAP</shortName>
    </alternativeName>
</protein>
<evidence type="ECO:0000250" key="1"/>
<evidence type="ECO:0000256" key="2">
    <source>
        <dbReference type="SAM" id="MobiDB-lite"/>
    </source>
</evidence>
<evidence type="ECO:0000305" key="3"/>
<gene>
    <name type="ordered locus">SAV_1674</name>
</gene>
<accession>Q82MI6</accession>
<proteinExistence type="inferred from homology"/>
<sequence length="676" mass="72714">MIPPHRCLTDPLLQGSWPGYLPPMPKRARRMRLTTWRSPVTAVIAALLAAFLTPAAAHGAPRESAPVYSYENAIRESVWVDTRLDGDGDGKTDRVAVDVVRPRELARQGRKIPVIMDASPYYSCCGRGNESQKKTYDANGDVVRMPLFYDNYFVPRGYAFVGVDLAGTNRSDGCVDVGGRSDIQSAKAVIDWLNGRAHGYTSRTGTARAKATWTNGRTGMIGKSWDGTVANGVAATGVKGLKTIVPISAISSWYDYYFAKGAPLYDSGPDWLSDYVDSPDARTKCAAVQRKLVDEAPRTGDWTSLWTERDYVKDASKVRASVFLVHGMQDLNVRAKNFGQWWSALAKNGVERKIWLSQTGHVDPFDFRRTAWVDTLHRWFDHELLGYDNGVDREPTADIERHPDQWVTSTLWPPRGTDAVTLRPGTGTQAGVGTLGLRTGSGTETFTDDPRLSETDWAAHIDESTASKAGFVTAPLAGDVRLSGSSKVTVTATPTTSTAHLSAVLVDLGPDTIRDYADGGEGITTLTDRTCWGASTAGDSACFKNTRATTAAVDYTVLSRGWADLGNHASARKGVPLTPGKAYTITLDLAATDHVVPKGHRLALIVAGTDKDLIDPPSSTPTLTLDLARTSARVPLVGGAAAFTRATAQSGTAADATVLDGVREPHTAHRVPGGGL</sequence>
<feature type="chain" id="PRO_0000220239" description="Putative Xaa-Pro dipeptidyl-peptidase">
    <location>
        <begin position="1"/>
        <end position="676"/>
    </location>
</feature>
<feature type="region of interest" description="Disordered" evidence="2">
    <location>
        <begin position="423"/>
        <end position="450"/>
    </location>
</feature>
<feature type="active site" description="Charge relay system" evidence="1">
    <location>
        <position position="224"/>
    </location>
</feature>
<feature type="active site" description="Charge relay system" evidence="1">
    <location>
        <position position="330"/>
    </location>
</feature>
<feature type="active site" description="Charge relay system" evidence="1">
    <location>
        <position position="361"/>
    </location>
</feature>
<organism>
    <name type="scientific">Streptomyces avermitilis (strain ATCC 31267 / DSM 46492 / JCM 5070 / NBRC 14893 / NCIMB 12804 / NRRL 8165 / MA-4680)</name>
    <dbReference type="NCBI Taxonomy" id="227882"/>
    <lineage>
        <taxon>Bacteria</taxon>
        <taxon>Bacillati</taxon>
        <taxon>Actinomycetota</taxon>
        <taxon>Actinomycetes</taxon>
        <taxon>Kitasatosporales</taxon>
        <taxon>Streptomycetaceae</taxon>
        <taxon>Streptomyces</taxon>
    </lineage>
</organism>
<reference key="1">
    <citation type="journal article" date="2001" name="Proc. Natl. Acad. Sci. U.S.A.">
        <title>Genome sequence of an industrial microorganism Streptomyces avermitilis: deducing the ability of producing secondary metabolites.</title>
        <authorList>
            <person name="Omura S."/>
            <person name="Ikeda H."/>
            <person name="Ishikawa J."/>
            <person name="Hanamoto A."/>
            <person name="Takahashi C."/>
            <person name="Shinose M."/>
            <person name="Takahashi Y."/>
            <person name="Horikawa H."/>
            <person name="Nakazawa H."/>
            <person name="Osonoe T."/>
            <person name="Kikuchi H."/>
            <person name="Shiba T."/>
            <person name="Sakaki Y."/>
            <person name="Hattori M."/>
        </authorList>
    </citation>
    <scope>NUCLEOTIDE SEQUENCE [LARGE SCALE GENOMIC DNA]</scope>
    <source>
        <strain>ATCC 31267 / DSM 46492 / JCM 5070 / NBRC 14893 / NCIMB 12804 / NRRL 8165 / MA-4680</strain>
    </source>
</reference>
<reference key="2">
    <citation type="journal article" date="2003" name="Nat. Biotechnol.">
        <title>Complete genome sequence and comparative analysis of the industrial microorganism Streptomyces avermitilis.</title>
        <authorList>
            <person name="Ikeda H."/>
            <person name="Ishikawa J."/>
            <person name="Hanamoto A."/>
            <person name="Shinose M."/>
            <person name="Kikuchi H."/>
            <person name="Shiba T."/>
            <person name="Sakaki Y."/>
            <person name="Hattori M."/>
            <person name="Omura S."/>
        </authorList>
    </citation>
    <scope>NUCLEOTIDE SEQUENCE [LARGE SCALE GENOMIC DNA]</scope>
    <source>
        <strain>ATCC 31267 / DSM 46492 / JCM 5070 / NBRC 14893 / NCIMB 12804 / NRRL 8165 / MA-4680</strain>
    </source>
</reference>
<keyword id="KW-0031">Aminopeptidase</keyword>
<keyword id="KW-0378">Hydrolase</keyword>
<keyword id="KW-0645">Protease</keyword>
<keyword id="KW-1185">Reference proteome</keyword>
<keyword id="KW-0720">Serine protease</keyword>
<name>PEPX_STRAW</name>
<comment type="catalytic activity">
    <reaction>
        <text>Hydrolyzes Xaa-Pro-|- bonds to release unblocked, N-terminal dipeptides from substrates including Ala-Pro-|-p-nitroanilide and (sequentially) Tyr-Pro-|-Phe-Pro-|-Gly-Pro-|-Ile.</text>
        <dbReference type="EC" id="3.4.14.11"/>
    </reaction>
</comment>
<comment type="similarity">
    <text evidence="3">Belongs to the peptidase S15 family.</text>
</comment>